<dbReference type="EMBL" id="AY604457">
    <property type="protein sequence ID" value="AAT46159.1"/>
    <property type="molecule type" value="Genomic_DNA"/>
</dbReference>
<dbReference type="GO" id="GO:0005743">
    <property type="term" value="C:mitochondrial inner membrane"/>
    <property type="evidence" value="ECO:0007669"/>
    <property type="project" value="UniProtKB-SubCell"/>
</dbReference>
<dbReference type="GO" id="GO:0045275">
    <property type="term" value="C:respiratory chain complex III"/>
    <property type="evidence" value="ECO:0007669"/>
    <property type="project" value="InterPro"/>
</dbReference>
<dbReference type="GO" id="GO:0046872">
    <property type="term" value="F:metal ion binding"/>
    <property type="evidence" value="ECO:0007669"/>
    <property type="project" value="UniProtKB-KW"/>
</dbReference>
<dbReference type="GO" id="GO:0008121">
    <property type="term" value="F:ubiquinol-cytochrome-c reductase activity"/>
    <property type="evidence" value="ECO:0007669"/>
    <property type="project" value="InterPro"/>
</dbReference>
<dbReference type="GO" id="GO:0006122">
    <property type="term" value="P:mitochondrial electron transport, ubiquinol to cytochrome c"/>
    <property type="evidence" value="ECO:0007669"/>
    <property type="project" value="TreeGrafter"/>
</dbReference>
<dbReference type="CDD" id="cd00290">
    <property type="entry name" value="cytochrome_b_C"/>
    <property type="match status" value="1"/>
</dbReference>
<dbReference type="CDD" id="cd00284">
    <property type="entry name" value="Cytochrome_b_N"/>
    <property type="match status" value="1"/>
</dbReference>
<dbReference type="FunFam" id="1.20.810.10:FF:000002">
    <property type="entry name" value="Cytochrome b"/>
    <property type="match status" value="1"/>
</dbReference>
<dbReference type="Gene3D" id="1.20.810.10">
    <property type="entry name" value="Cytochrome Bc1 Complex, Chain C"/>
    <property type="match status" value="1"/>
</dbReference>
<dbReference type="InterPro" id="IPR005798">
    <property type="entry name" value="Cyt_b/b6_C"/>
</dbReference>
<dbReference type="InterPro" id="IPR036150">
    <property type="entry name" value="Cyt_b/b6_C_sf"/>
</dbReference>
<dbReference type="InterPro" id="IPR005797">
    <property type="entry name" value="Cyt_b/b6_N"/>
</dbReference>
<dbReference type="InterPro" id="IPR027387">
    <property type="entry name" value="Cytb/b6-like_sf"/>
</dbReference>
<dbReference type="InterPro" id="IPR030689">
    <property type="entry name" value="Cytochrome_b"/>
</dbReference>
<dbReference type="InterPro" id="IPR048260">
    <property type="entry name" value="Cytochrome_b_C_euk/bac"/>
</dbReference>
<dbReference type="InterPro" id="IPR048259">
    <property type="entry name" value="Cytochrome_b_N_euk/bac"/>
</dbReference>
<dbReference type="InterPro" id="IPR016174">
    <property type="entry name" value="Di-haem_cyt_TM"/>
</dbReference>
<dbReference type="PANTHER" id="PTHR19271">
    <property type="entry name" value="CYTOCHROME B"/>
    <property type="match status" value="1"/>
</dbReference>
<dbReference type="PANTHER" id="PTHR19271:SF16">
    <property type="entry name" value="CYTOCHROME B"/>
    <property type="match status" value="1"/>
</dbReference>
<dbReference type="Pfam" id="PF00032">
    <property type="entry name" value="Cytochrom_B_C"/>
    <property type="match status" value="1"/>
</dbReference>
<dbReference type="Pfam" id="PF00033">
    <property type="entry name" value="Cytochrome_B"/>
    <property type="match status" value="1"/>
</dbReference>
<dbReference type="PIRSF" id="PIRSF038885">
    <property type="entry name" value="COB"/>
    <property type="match status" value="1"/>
</dbReference>
<dbReference type="SUPFAM" id="SSF81648">
    <property type="entry name" value="a domain/subunit of cytochrome bc1 complex (Ubiquinol-cytochrome c reductase)"/>
    <property type="match status" value="1"/>
</dbReference>
<dbReference type="SUPFAM" id="SSF81342">
    <property type="entry name" value="Transmembrane di-heme cytochromes"/>
    <property type="match status" value="1"/>
</dbReference>
<dbReference type="PROSITE" id="PS51003">
    <property type="entry name" value="CYTB_CTER"/>
    <property type="match status" value="1"/>
</dbReference>
<dbReference type="PROSITE" id="PS51002">
    <property type="entry name" value="CYTB_NTER"/>
    <property type="match status" value="1"/>
</dbReference>
<evidence type="ECO:0000250" key="1"/>
<evidence type="ECO:0000250" key="2">
    <source>
        <dbReference type="UniProtKB" id="P00157"/>
    </source>
</evidence>
<evidence type="ECO:0000255" key="3">
    <source>
        <dbReference type="PROSITE-ProRule" id="PRU00967"/>
    </source>
</evidence>
<evidence type="ECO:0000255" key="4">
    <source>
        <dbReference type="PROSITE-ProRule" id="PRU00968"/>
    </source>
</evidence>
<proteinExistence type="inferred from homology"/>
<comment type="function">
    <text evidence="2">Component of the ubiquinol-cytochrome c reductase complex (complex III or cytochrome b-c1 complex) that is part of the mitochondrial respiratory chain. The b-c1 complex mediates electron transfer from ubiquinol to cytochrome c. Contributes to the generation of a proton gradient across the mitochondrial membrane that is then used for ATP synthesis.</text>
</comment>
<comment type="cofactor">
    <cofactor evidence="2">
        <name>heme b</name>
        <dbReference type="ChEBI" id="CHEBI:60344"/>
    </cofactor>
    <text evidence="2">Binds 2 heme b groups non-covalently.</text>
</comment>
<comment type="subunit">
    <text evidence="2">The cytochrome bc1 complex contains 11 subunits: 3 respiratory subunits (MT-CYB, CYC1 and UQCRFS1), 2 core proteins (UQCRC1 and UQCRC2) and 6 low-molecular weight proteins (UQCRH/QCR6, UQCRB/QCR7, UQCRQ/QCR8, UQCR10/QCR9, UQCR11/QCR10 and a cleavage product of UQCRFS1). This cytochrome bc1 complex then forms a dimer.</text>
</comment>
<comment type="subcellular location">
    <subcellularLocation>
        <location evidence="2">Mitochondrion inner membrane</location>
        <topology evidence="2">Multi-pass membrane protein</topology>
    </subcellularLocation>
</comment>
<comment type="miscellaneous">
    <text evidence="1">Heme 1 (or BL or b562) is low-potential and absorbs at about 562 nm, and heme 2 (or BH or b566) is high-potential and absorbs at about 566 nm.</text>
</comment>
<comment type="similarity">
    <text evidence="3 4">Belongs to the cytochrome b family.</text>
</comment>
<comment type="caution">
    <text evidence="2">The full-length protein contains only eight transmembrane helices, not nine as predicted by bioinformatics tools.</text>
</comment>
<keyword id="KW-0249">Electron transport</keyword>
<keyword id="KW-0349">Heme</keyword>
<keyword id="KW-0408">Iron</keyword>
<keyword id="KW-0472">Membrane</keyword>
<keyword id="KW-0479">Metal-binding</keyword>
<keyword id="KW-0496">Mitochondrion</keyword>
<keyword id="KW-0999">Mitochondrion inner membrane</keyword>
<keyword id="KW-0679">Respiratory chain</keyword>
<keyword id="KW-0812">Transmembrane</keyword>
<keyword id="KW-1133">Transmembrane helix</keyword>
<keyword id="KW-0813">Transport</keyword>
<keyword id="KW-0830">Ubiquinone</keyword>
<geneLocation type="mitochondrion"/>
<gene>
    <name type="primary">MT-CYB</name>
    <name type="synonym">COB</name>
    <name type="synonym">CYTB</name>
    <name type="synonym">MTCYB</name>
</gene>
<protein>
    <recommendedName>
        <fullName>Cytochrome b</fullName>
    </recommendedName>
    <alternativeName>
        <fullName>Complex III subunit 3</fullName>
    </alternativeName>
    <alternativeName>
        <fullName>Complex III subunit III</fullName>
    </alternativeName>
    <alternativeName>
        <fullName>Cytochrome b-c1 complex subunit 3</fullName>
    </alternativeName>
    <alternativeName>
        <fullName>Ubiquinol-cytochrome-c reductase complex cytochrome b subunit</fullName>
    </alternativeName>
</protein>
<feature type="chain" id="PRO_0000254751" description="Cytochrome b">
    <location>
        <begin position="1"/>
        <end position="379"/>
    </location>
</feature>
<feature type="transmembrane region" description="Helical" evidence="2">
    <location>
        <begin position="33"/>
        <end position="53"/>
    </location>
</feature>
<feature type="transmembrane region" description="Helical" evidence="2">
    <location>
        <begin position="77"/>
        <end position="98"/>
    </location>
</feature>
<feature type="transmembrane region" description="Helical" evidence="2">
    <location>
        <begin position="113"/>
        <end position="133"/>
    </location>
</feature>
<feature type="transmembrane region" description="Helical" evidence="2">
    <location>
        <begin position="178"/>
        <end position="198"/>
    </location>
</feature>
<feature type="transmembrane region" description="Helical" evidence="2">
    <location>
        <begin position="226"/>
        <end position="246"/>
    </location>
</feature>
<feature type="transmembrane region" description="Helical" evidence="2">
    <location>
        <begin position="288"/>
        <end position="308"/>
    </location>
</feature>
<feature type="transmembrane region" description="Helical" evidence="2">
    <location>
        <begin position="320"/>
        <end position="340"/>
    </location>
</feature>
<feature type="transmembrane region" description="Helical" evidence="2">
    <location>
        <begin position="347"/>
        <end position="367"/>
    </location>
</feature>
<feature type="binding site" description="axial binding residue" evidence="2">
    <location>
        <position position="83"/>
    </location>
    <ligand>
        <name>heme b</name>
        <dbReference type="ChEBI" id="CHEBI:60344"/>
        <label>b562</label>
    </ligand>
    <ligandPart>
        <name>Fe</name>
        <dbReference type="ChEBI" id="CHEBI:18248"/>
    </ligandPart>
</feature>
<feature type="binding site" description="axial binding residue" evidence="2">
    <location>
        <position position="97"/>
    </location>
    <ligand>
        <name>heme b</name>
        <dbReference type="ChEBI" id="CHEBI:60344"/>
        <label>b566</label>
    </ligand>
    <ligandPart>
        <name>Fe</name>
        <dbReference type="ChEBI" id="CHEBI:18248"/>
    </ligandPart>
</feature>
<feature type="binding site" description="axial binding residue" evidence="2">
    <location>
        <position position="182"/>
    </location>
    <ligand>
        <name>heme b</name>
        <dbReference type="ChEBI" id="CHEBI:60344"/>
        <label>b562</label>
    </ligand>
    <ligandPart>
        <name>Fe</name>
        <dbReference type="ChEBI" id="CHEBI:18248"/>
    </ligandPart>
</feature>
<feature type="binding site" description="axial binding residue" evidence="2">
    <location>
        <position position="196"/>
    </location>
    <ligand>
        <name>heme b</name>
        <dbReference type="ChEBI" id="CHEBI:60344"/>
        <label>b566</label>
    </ligand>
    <ligandPart>
        <name>Fe</name>
        <dbReference type="ChEBI" id="CHEBI:18248"/>
    </ligandPart>
</feature>
<feature type="binding site" evidence="2">
    <location>
        <position position="201"/>
    </location>
    <ligand>
        <name>a ubiquinone</name>
        <dbReference type="ChEBI" id="CHEBI:16389"/>
    </ligand>
</feature>
<organism>
    <name type="scientific">Pteronotus rubiginosus</name>
    <name type="common">Mustached bat</name>
    <dbReference type="NCBI Taxonomy" id="280976"/>
    <lineage>
        <taxon>Eukaryota</taxon>
        <taxon>Metazoa</taxon>
        <taxon>Chordata</taxon>
        <taxon>Craniata</taxon>
        <taxon>Vertebrata</taxon>
        <taxon>Euteleostomi</taxon>
        <taxon>Mammalia</taxon>
        <taxon>Eutheria</taxon>
        <taxon>Laurasiatheria</taxon>
        <taxon>Chiroptera</taxon>
        <taxon>Yangochiroptera</taxon>
        <taxon>Mormoopidae</taxon>
        <taxon>Pteronotus</taxon>
    </lineage>
</organism>
<reference key="1">
    <citation type="journal article" date="2006" name="Biol. J. Linn. Soc. Lond.">
        <title>The geography of diversification in the mormoopids (Chiroptera: Mormoopidae).</title>
        <authorList>
            <person name="Davalos L.M."/>
        </authorList>
    </citation>
    <scope>NUCLEOTIDE SEQUENCE [GENOMIC DNA]</scope>
</reference>
<sequence length="379" mass="42560">MTNIRKTHPLLKIINESLVDLPVPSSVSSWXNXGYLLTACLAVQILTGLFLAMHYTSDTATAFNSVTHICRDVNYGWALRYLHANGASMFFICLYIHIGRGMYYGSYMYSETWNIGIILLFAVMATAFMGYVLPWGQMSFWGATVITNLLSAIPYIGTDLVQWIWGGFSVDKATLTRFFAFHFLLPFIIAALVVVHLLFLHETGSSNPTGIPSDPDMVPFHPYHTIKDILGILAMLTLLSMLVLFSPDLLGDPDNYIPANPLNTPPHIKPEWYFLFAYAILRSIPNKLGGVLALVLSILVLAVIPLLHTSKQRTMMFRPISQCLFWLLVADLLTLTWIGGQPVEHPYIIIGQMASIMYFTIILVLMPATSMMENHLLKW</sequence>
<accession>Q53AJ7</accession>
<name>CYB_PTERU</name>